<organism>
    <name type="scientific">Methylobacillus flagellatus (strain ATCC 51484 / DSM 6875 / VKM B-1610 / KT)</name>
    <dbReference type="NCBI Taxonomy" id="265072"/>
    <lineage>
        <taxon>Bacteria</taxon>
        <taxon>Pseudomonadati</taxon>
        <taxon>Pseudomonadota</taxon>
        <taxon>Betaproteobacteria</taxon>
        <taxon>Nitrosomonadales</taxon>
        <taxon>Methylophilaceae</taxon>
        <taxon>Methylobacillus</taxon>
    </lineage>
</organism>
<name>TAL_METFK</name>
<keyword id="KW-0963">Cytoplasm</keyword>
<keyword id="KW-0570">Pentose shunt</keyword>
<keyword id="KW-1185">Reference proteome</keyword>
<keyword id="KW-0704">Schiff base</keyword>
<keyword id="KW-0808">Transferase</keyword>
<dbReference type="EC" id="2.2.1.2" evidence="2"/>
<dbReference type="EMBL" id="CP000284">
    <property type="protein sequence ID" value="ABE49923.1"/>
    <property type="molecule type" value="Genomic_DNA"/>
</dbReference>
<dbReference type="RefSeq" id="WP_011479877.1">
    <property type="nucleotide sequence ID" value="NC_007947.1"/>
</dbReference>
<dbReference type="SMR" id="Q1H0R4"/>
<dbReference type="STRING" id="265072.Mfla_1655"/>
<dbReference type="KEGG" id="mfa:Mfla_1655"/>
<dbReference type="eggNOG" id="COG0176">
    <property type="taxonomic scope" value="Bacteria"/>
</dbReference>
<dbReference type="HOGENOM" id="CLU_047470_0_1_4"/>
<dbReference type="OrthoDB" id="9809101at2"/>
<dbReference type="UniPathway" id="UPA00115">
    <property type="reaction ID" value="UER00414"/>
</dbReference>
<dbReference type="Proteomes" id="UP000002440">
    <property type="component" value="Chromosome"/>
</dbReference>
<dbReference type="GO" id="GO:0005829">
    <property type="term" value="C:cytosol"/>
    <property type="evidence" value="ECO:0007669"/>
    <property type="project" value="TreeGrafter"/>
</dbReference>
<dbReference type="GO" id="GO:0004801">
    <property type="term" value="F:transaldolase activity"/>
    <property type="evidence" value="ECO:0000250"/>
    <property type="project" value="UniProtKB"/>
</dbReference>
<dbReference type="GO" id="GO:0005975">
    <property type="term" value="P:carbohydrate metabolic process"/>
    <property type="evidence" value="ECO:0007669"/>
    <property type="project" value="InterPro"/>
</dbReference>
<dbReference type="GO" id="GO:0006098">
    <property type="term" value="P:pentose-phosphate shunt"/>
    <property type="evidence" value="ECO:0007669"/>
    <property type="project" value="UniProtKB-UniRule"/>
</dbReference>
<dbReference type="CDD" id="cd00957">
    <property type="entry name" value="Transaldolase_TalAB"/>
    <property type="match status" value="1"/>
</dbReference>
<dbReference type="FunFam" id="3.20.20.70:FF:000002">
    <property type="entry name" value="Transaldolase"/>
    <property type="match status" value="1"/>
</dbReference>
<dbReference type="Gene3D" id="3.20.20.70">
    <property type="entry name" value="Aldolase class I"/>
    <property type="match status" value="1"/>
</dbReference>
<dbReference type="HAMAP" id="MF_00492">
    <property type="entry name" value="Transaldolase_1"/>
    <property type="match status" value="1"/>
</dbReference>
<dbReference type="InterPro" id="IPR013785">
    <property type="entry name" value="Aldolase_TIM"/>
</dbReference>
<dbReference type="InterPro" id="IPR001585">
    <property type="entry name" value="TAL/FSA"/>
</dbReference>
<dbReference type="InterPro" id="IPR004730">
    <property type="entry name" value="Transaldolase_1"/>
</dbReference>
<dbReference type="InterPro" id="IPR018225">
    <property type="entry name" value="Transaldolase_AS"/>
</dbReference>
<dbReference type="NCBIfam" id="NF009001">
    <property type="entry name" value="PRK12346.1"/>
    <property type="match status" value="1"/>
</dbReference>
<dbReference type="NCBIfam" id="TIGR00874">
    <property type="entry name" value="talAB"/>
    <property type="match status" value="1"/>
</dbReference>
<dbReference type="PANTHER" id="PTHR10683">
    <property type="entry name" value="TRANSALDOLASE"/>
    <property type="match status" value="1"/>
</dbReference>
<dbReference type="PANTHER" id="PTHR10683:SF18">
    <property type="entry name" value="TRANSALDOLASE"/>
    <property type="match status" value="1"/>
</dbReference>
<dbReference type="Pfam" id="PF00923">
    <property type="entry name" value="TAL_FSA"/>
    <property type="match status" value="1"/>
</dbReference>
<dbReference type="SUPFAM" id="SSF51569">
    <property type="entry name" value="Aldolase"/>
    <property type="match status" value="1"/>
</dbReference>
<dbReference type="PROSITE" id="PS01054">
    <property type="entry name" value="TRANSALDOLASE_1"/>
    <property type="match status" value="1"/>
</dbReference>
<dbReference type="PROSITE" id="PS00958">
    <property type="entry name" value="TRANSALDOLASE_2"/>
    <property type="match status" value="1"/>
</dbReference>
<proteinExistence type="inferred from homology"/>
<gene>
    <name evidence="2" type="primary">tal</name>
    <name type="ordered locus">Mfla_1655</name>
</gene>
<sequence>MANLFDQLKEFTTIVADTGDVEAIKSVKPYDATTNPSLLLKASTIPQYAPLIDEAIAYAKSQSGDKAQQIEDAADKLAVLIGLEILKHIPGKISTEVDARLSFDTEAMVQKGRKLIKLYEDAGIAKDRVLIKLASTWEGIKAGEILEKEGINCNLTLLFSFAQARACAEAGVFLISPFVGRILDWYKAKTGETYTAETDPGVQSVRKIYAYYKEHGYKTVVMGASFRNTGEIIALAGCDRLTVSPNLLEELKATEGKLERVLVDNGVTKQRPPLLTEKEFRFDLNEDAMATEKLAEGIRGFVVDQNKLEKALAEKL</sequence>
<feature type="chain" id="PRO_1000014503" description="Transaldolase">
    <location>
        <begin position="1"/>
        <end position="316"/>
    </location>
</feature>
<feature type="active site" description="Schiff-base intermediate with substrate" evidence="2">
    <location>
        <position position="132"/>
    </location>
</feature>
<reference key="1">
    <citation type="submission" date="2006-03" db="EMBL/GenBank/DDBJ databases">
        <title>Complete sequence of Methylobacillus flagellatus KT.</title>
        <authorList>
            <consortium name="US DOE Joint Genome Institute"/>
            <person name="Copeland A."/>
            <person name="Lucas S."/>
            <person name="Lapidus A."/>
            <person name="Barry K."/>
            <person name="Detter J.C."/>
            <person name="Glavina del Rio T."/>
            <person name="Hammon N."/>
            <person name="Israni S."/>
            <person name="Dalin E."/>
            <person name="Tice H."/>
            <person name="Pitluck S."/>
            <person name="Brettin T."/>
            <person name="Bruce D."/>
            <person name="Han C."/>
            <person name="Tapia R."/>
            <person name="Saunders E."/>
            <person name="Gilna P."/>
            <person name="Schmutz J."/>
            <person name="Larimer F."/>
            <person name="Land M."/>
            <person name="Kyrpides N."/>
            <person name="Anderson I."/>
            <person name="Richardson P."/>
        </authorList>
    </citation>
    <scope>NUCLEOTIDE SEQUENCE [LARGE SCALE GENOMIC DNA]</scope>
    <source>
        <strain>ATCC 51484 / DSM 6875 / VKM B-1610 / KT</strain>
    </source>
</reference>
<protein>
    <recommendedName>
        <fullName evidence="2">Transaldolase</fullName>
        <ecNumber evidence="2">2.2.1.2</ecNumber>
    </recommendedName>
</protein>
<accession>Q1H0R4</accession>
<comment type="function">
    <text evidence="2">Transaldolase is important for the balance of metabolites in the pentose-phosphate pathway.</text>
</comment>
<comment type="catalytic activity">
    <reaction evidence="2">
        <text>D-sedoheptulose 7-phosphate + D-glyceraldehyde 3-phosphate = D-erythrose 4-phosphate + beta-D-fructose 6-phosphate</text>
        <dbReference type="Rhea" id="RHEA:17053"/>
        <dbReference type="ChEBI" id="CHEBI:16897"/>
        <dbReference type="ChEBI" id="CHEBI:57483"/>
        <dbReference type="ChEBI" id="CHEBI:57634"/>
        <dbReference type="ChEBI" id="CHEBI:59776"/>
        <dbReference type="EC" id="2.2.1.2"/>
    </reaction>
</comment>
<comment type="pathway">
    <text evidence="2">Carbohydrate degradation; pentose phosphate pathway; D-glyceraldehyde 3-phosphate and beta-D-fructose 6-phosphate from D-ribose 5-phosphate and D-xylulose 5-phosphate (non-oxidative stage): step 2/3.</text>
</comment>
<comment type="subunit">
    <text evidence="1">Homodimer.</text>
</comment>
<comment type="subcellular location">
    <subcellularLocation>
        <location evidence="2">Cytoplasm</location>
    </subcellularLocation>
</comment>
<comment type="similarity">
    <text evidence="2">Belongs to the transaldolase family. Type 1 subfamily.</text>
</comment>
<evidence type="ECO:0000250" key="1"/>
<evidence type="ECO:0000255" key="2">
    <source>
        <dbReference type="HAMAP-Rule" id="MF_00492"/>
    </source>
</evidence>